<comment type="subcellular location">
    <subcellularLocation>
        <location>Secreted</location>
    </subcellularLocation>
</comment>
<comment type="mass spectrometry"/>
<comment type="similarity">
    <text evidence="2">Belongs to the FARP (FMRFamide related peptide) family.</text>
</comment>
<keyword id="KW-0027">Amidation</keyword>
<keyword id="KW-0903">Direct protein sequencing</keyword>
<keyword id="KW-0527">Neuropeptide</keyword>
<keyword id="KW-0964">Secreted</keyword>
<feature type="peptide" id="PRO_0000043690" description="FMRFamide-like neuropeptide FLP7">
    <location>
        <begin position="1"/>
        <end position="10"/>
    </location>
</feature>
<feature type="modified residue" description="Phenylalanine amide" evidence="1">
    <location>
        <position position="10"/>
    </location>
</feature>
<name>FAR7_MACRS</name>
<protein>
    <recommendedName>
        <fullName>FMRFamide-like neuropeptide FLP7</fullName>
    </recommendedName>
    <alternativeName>
        <fullName>GYGDRNFLRF-amide</fullName>
    </alternativeName>
</protein>
<reference evidence="2" key="1">
    <citation type="journal article" date="2001" name="Peptides">
        <title>Three more novel FMRFamide-like neuropeptide sequences from the eyestalk of the giant freshwater prawn Macrobrachium rosenbergii.</title>
        <authorList>
            <person name="Sithigorngul P."/>
            <person name="Saraithongkum W."/>
            <person name="Longyant S."/>
            <person name="Panchan N."/>
            <person name="Sithigorngul W."/>
            <person name="Petsom A."/>
        </authorList>
    </citation>
    <scope>PROTEIN SEQUENCE</scope>
    <scope>AMIDATION AT PHE-10</scope>
    <scope>MASS SPECTROMETRY</scope>
    <source>
        <tissue>Eyestalk</tissue>
    </source>
</reference>
<dbReference type="GO" id="GO:0005576">
    <property type="term" value="C:extracellular region"/>
    <property type="evidence" value="ECO:0007669"/>
    <property type="project" value="UniProtKB-SubCell"/>
</dbReference>
<dbReference type="GO" id="GO:0007218">
    <property type="term" value="P:neuropeptide signaling pathway"/>
    <property type="evidence" value="ECO:0000314"/>
    <property type="project" value="UniProtKB"/>
</dbReference>
<sequence>GYGDRNFLRF</sequence>
<evidence type="ECO:0000269" key="1">
    <source>
    </source>
</evidence>
<evidence type="ECO:0000305" key="2"/>
<proteinExistence type="evidence at protein level"/>
<accession>P83280</accession>
<organism evidence="2">
    <name type="scientific">Macrobrachium rosenbergii</name>
    <name type="common">Giant fresh water prawn</name>
    <dbReference type="NCBI Taxonomy" id="79674"/>
    <lineage>
        <taxon>Eukaryota</taxon>
        <taxon>Metazoa</taxon>
        <taxon>Ecdysozoa</taxon>
        <taxon>Arthropoda</taxon>
        <taxon>Crustacea</taxon>
        <taxon>Multicrustacea</taxon>
        <taxon>Malacostraca</taxon>
        <taxon>Eumalacostraca</taxon>
        <taxon>Eucarida</taxon>
        <taxon>Decapoda</taxon>
        <taxon>Pleocyemata</taxon>
        <taxon>Caridea</taxon>
        <taxon>Palaemonoidea</taxon>
        <taxon>Palaemonidae</taxon>
        <taxon>Macrobrachium</taxon>
    </lineage>
</organism>